<proteinExistence type="inferred from homology"/>
<accession>P71154</accession>
<accession>D3RQV6</accession>
<reference key="1">
    <citation type="journal article" date="1996" name="Biochim. Biophys. Acta">
        <title>Molecular cloning and expression of the gene encoding Chromatium vinosum 2[4Fe-4S] ferredoxin.</title>
        <authorList>
            <person name="Moulis J.-M."/>
        </authorList>
    </citation>
    <scope>NUCLEOTIDE SEQUENCE [GENOMIC DNA]</scope>
</reference>
<reference key="2">
    <citation type="journal article" date="2011" name="Stand. Genomic Sci.">
        <title>Complete genome sequence of Allochromatium vinosum DSM 180(T).</title>
        <authorList>
            <person name="Weissgerber T."/>
            <person name="Zigann R."/>
            <person name="Bruce D."/>
            <person name="Chang Y.J."/>
            <person name="Detter J.C."/>
            <person name="Han C."/>
            <person name="Hauser L."/>
            <person name="Jeffries C.D."/>
            <person name="Land M."/>
            <person name="Munk A.C."/>
            <person name="Tapia R."/>
            <person name="Dahl C."/>
        </authorList>
    </citation>
    <scope>NUCLEOTIDE SEQUENCE [LARGE SCALE GENOMIC DNA]</scope>
    <source>
        <strain>ATCC 17899 / DSM 180 / NBRC 103801 / NCIMB 10441 / D</strain>
    </source>
</reference>
<keyword id="KW-0067">ATP-binding</keyword>
<keyword id="KW-0173">Coenzyme A biosynthesis</keyword>
<keyword id="KW-0963">Cytoplasm</keyword>
<keyword id="KW-0460">Magnesium</keyword>
<keyword id="KW-0547">Nucleotide-binding</keyword>
<keyword id="KW-0548">Nucleotidyltransferase</keyword>
<keyword id="KW-1185">Reference proteome</keyword>
<keyword id="KW-0808">Transferase</keyword>
<name>COAD_ALLVD</name>
<evidence type="ECO:0000255" key="1">
    <source>
        <dbReference type="HAMAP-Rule" id="MF_00151"/>
    </source>
</evidence>
<evidence type="ECO:0000305" key="2"/>
<comment type="function">
    <text evidence="1">Reversibly transfers an adenylyl group from ATP to 4'-phosphopantetheine, yielding dephospho-CoA (dPCoA) and pyrophosphate.</text>
</comment>
<comment type="catalytic activity">
    <reaction evidence="1">
        <text>(R)-4'-phosphopantetheine + ATP + H(+) = 3'-dephospho-CoA + diphosphate</text>
        <dbReference type="Rhea" id="RHEA:19801"/>
        <dbReference type="ChEBI" id="CHEBI:15378"/>
        <dbReference type="ChEBI" id="CHEBI:30616"/>
        <dbReference type="ChEBI" id="CHEBI:33019"/>
        <dbReference type="ChEBI" id="CHEBI:57328"/>
        <dbReference type="ChEBI" id="CHEBI:61723"/>
        <dbReference type="EC" id="2.7.7.3"/>
    </reaction>
</comment>
<comment type="cofactor">
    <cofactor evidence="1">
        <name>Mg(2+)</name>
        <dbReference type="ChEBI" id="CHEBI:18420"/>
    </cofactor>
</comment>
<comment type="pathway">
    <text evidence="1">Cofactor biosynthesis; coenzyme A biosynthesis; CoA from (R)-pantothenate: step 4/5.</text>
</comment>
<comment type="subunit">
    <text evidence="1">Homohexamer.</text>
</comment>
<comment type="subcellular location">
    <subcellularLocation>
        <location evidence="1">Cytoplasm</location>
    </subcellularLocation>
</comment>
<comment type="similarity">
    <text evidence="1">Belongs to the bacterial CoaD family.</text>
</comment>
<organism>
    <name type="scientific">Allochromatium vinosum (strain ATCC 17899 / DSM 180 / NBRC 103801 / NCIMB 10441 / D)</name>
    <name type="common">Chromatium vinosum</name>
    <dbReference type="NCBI Taxonomy" id="572477"/>
    <lineage>
        <taxon>Bacteria</taxon>
        <taxon>Pseudomonadati</taxon>
        <taxon>Pseudomonadota</taxon>
        <taxon>Gammaproteobacteria</taxon>
        <taxon>Chromatiales</taxon>
        <taxon>Chromatiaceae</taxon>
        <taxon>Allochromatium</taxon>
    </lineage>
</organism>
<protein>
    <recommendedName>
        <fullName evidence="1">Phosphopantetheine adenylyltransferase</fullName>
        <ecNumber evidence="1">2.7.7.3</ecNumber>
    </recommendedName>
    <alternativeName>
        <fullName evidence="1">Dephospho-CoA pyrophosphorylase</fullName>
    </alternativeName>
    <alternativeName>
        <fullName evidence="1">Pantetheine-phosphate adenylyltransferase</fullName>
        <shortName evidence="1">PPAT</shortName>
    </alternativeName>
</protein>
<feature type="chain" id="PRO_0000156192" description="Phosphopantetheine adenylyltransferase">
    <location>
        <begin position="1"/>
        <end position="158"/>
    </location>
</feature>
<feature type="binding site" evidence="1">
    <location>
        <begin position="9"/>
        <end position="10"/>
    </location>
    <ligand>
        <name>ATP</name>
        <dbReference type="ChEBI" id="CHEBI:30616"/>
    </ligand>
</feature>
<feature type="binding site" evidence="1">
    <location>
        <position position="9"/>
    </location>
    <ligand>
        <name>substrate</name>
    </ligand>
</feature>
<feature type="binding site" evidence="1">
    <location>
        <position position="17"/>
    </location>
    <ligand>
        <name>ATP</name>
        <dbReference type="ChEBI" id="CHEBI:30616"/>
    </ligand>
</feature>
<feature type="binding site" evidence="1">
    <location>
        <position position="41"/>
    </location>
    <ligand>
        <name>substrate</name>
    </ligand>
</feature>
<feature type="binding site" evidence="1">
    <location>
        <position position="73"/>
    </location>
    <ligand>
        <name>substrate</name>
    </ligand>
</feature>
<feature type="binding site" evidence="1">
    <location>
        <position position="87"/>
    </location>
    <ligand>
        <name>substrate</name>
    </ligand>
</feature>
<feature type="binding site" evidence="1">
    <location>
        <begin position="88"/>
        <end position="90"/>
    </location>
    <ligand>
        <name>ATP</name>
        <dbReference type="ChEBI" id="CHEBI:30616"/>
    </ligand>
</feature>
<feature type="binding site" evidence="1">
    <location>
        <position position="98"/>
    </location>
    <ligand>
        <name>ATP</name>
        <dbReference type="ChEBI" id="CHEBI:30616"/>
    </ligand>
</feature>
<feature type="binding site" evidence="1">
    <location>
        <begin position="123"/>
        <end position="129"/>
    </location>
    <ligand>
        <name>ATP</name>
        <dbReference type="ChEBI" id="CHEBI:30616"/>
    </ligand>
</feature>
<feature type="site" description="Transition state stabilizer" evidence="1">
    <location>
        <position position="17"/>
    </location>
</feature>
<feature type="sequence conflict" description="In Ref. 1; AAC44332." evidence="2" ref="1">
    <original>RFG</original>
    <variation>GCGLDKIRATHHPT</variation>
    <location>
        <begin position="156"/>
        <end position="158"/>
    </location>
</feature>
<sequence length="158" mass="17432">MRTVVYPGTFDPITNGHVDLIHRAARLFDRVVVAVAADTGKTPVFSTEERVELVRGSVAGDPNVEILPFEGLLVNFARTLGVSVIMRGLRAVSDFEYEFQLAGMNRRMAPDIETLFLTPAEQYAYISSSLVREIARLRGDVSTFVTPTVQAALRARFG</sequence>
<dbReference type="EC" id="2.7.7.3" evidence="1"/>
<dbReference type="EMBL" id="U45327">
    <property type="protein sequence ID" value="AAC44332.1"/>
    <property type="molecule type" value="Genomic_DNA"/>
</dbReference>
<dbReference type="EMBL" id="CP001896">
    <property type="protein sequence ID" value="ADC63790.1"/>
    <property type="molecule type" value="Genomic_DNA"/>
</dbReference>
<dbReference type="PIR" id="S72166">
    <property type="entry name" value="S72166"/>
</dbReference>
<dbReference type="RefSeq" id="WP_012972055.1">
    <property type="nucleotide sequence ID" value="NC_013851.1"/>
</dbReference>
<dbReference type="SMR" id="P71154"/>
<dbReference type="STRING" id="572477.Alvin_2885"/>
<dbReference type="KEGG" id="alv:Alvin_2885"/>
<dbReference type="eggNOG" id="COG0669">
    <property type="taxonomic scope" value="Bacteria"/>
</dbReference>
<dbReference type="HOGENOM" id="CLU_100149_0_1_6"/>
<dbReference type="OrthoDB" id="9806661at2"/>
<dbReference type="UniPathway" id="UPA00241">
    <property type="reaction ID" value="UER00355"/>
</dbReference>
<dbReference type="Proteomes" id="UP000001441">
    <property type="component" value="Chromosome"/>
</dbReference>
<dbReference type="GO" id="GO:0005737">
    <property type="term" value="C:cytoplasm"/>
    <property type="evidence" value="ECO:0007669"/>
    <property type="project" value="UniProtKB-SubCell"/>
</dbReference>
<dbReference type="GO" id="GO:0005524">
    <property type="term" value="F:ATP binding"/>
    <property type="evidence" value="ECO:0007669"/>
    <property type="project" value="UniProtKB-KW"/>
</dbReference>
<dbReference type="GO" id="GO:0004595">
    <property type="term" value="F:pantetheine-phosphate adenylyltransferase activity"/>
    <property type="evidence" value="ECO:0007669"/>
    <property type="project" value="UniProtKB-UniRule"/>
</dbReference>
<dbReference type="GO" id="GO:0015937">
    <property type="term" value="P:coenzyme A biosynthetic process"/>
    <property type="evidence" value="ECO:0007669"/>
    <property type="project" value="UniProtKB-UniRule"/>
</dbReference>
<dbReference type="CDD" id="cd02163">
    <property type="entry name" value="PPAT"/>
    <property type="match status" value="1"/>
</dbReference>
<dbReference type="Gene3D" id="3.40.50.620">
    <property type="entry name" value="HUPs"/>
    <property type="match status" value="1"/>
</dbReference>
<dbReference type="HAMAP" id="MF_00151">
    <property type="entry name" value="PPAT_bact"/>
    <property type="match status" value="1"/>
</dbReference>
<dbReference type="InterPro" id="IPR004821">
    <property type="entry name" value="Cyt_trans-like"/>
</dbReference>
<dbReference type="InterPro" id="IPR001980">
    <property type="entry name" value="PPAT"/>
</dbReference>
<dbReference type="InterPro" id="IPR014729">
    <property type="entry name" value="Rossmann-like_a/b/a_fold"/>
</dbReference>
<dbReference type="NCBIfam" id="TIGR01510">
    <property type="entry name" value="coaD_prev_kdtB"/>
    <property type="match status" value="1"/>
</dbReference>
<dbReference type="NCBIfam" id="TIGR00125">
    <property type="entry name" value="cyt_tran_rel"/>
    <property type="match status" value="1"/>
</dbReference>
<dbReference type="PANTHER" id="PTHR21342">
    <property type="entry name" value="PHOSPHOPANTETHEINE ADENYLYLTRANSFERASE"/>
    <property type="match status" value="1"/>
</dbReference>
<dbReference type="PANTHER" id="PTHR21342:SF1">
    <property type="entry name" value="PHOSPHOPANTETHEINE ADENYLYLTRANSFERASE"/>
    <property type="match status" value="1"/>
</dbReference>
<dbReference type="Pfam" id="PF01467">
    <property type="entry name" value="CTP_transf_like"/>
    <property type="match status" value="1"/>
</dbReference>
<dbReference type="PRINTS" id="PR01020">
    <property type="entry name" value="LPSBIOSNTHSS"/>
</dbReference>
<dbReference type="SUPFAM" id="SSF52374">
    <property type="entry name" value="Nucleotidylyl transferase"/>
    <property type="match status" value="1"/>
</dbReference>
<gene>
    <name evidence="1" type="primary">coaD</name>
    <name type="synonym">kdtB</name>
    <name type="ordered locus">Alvin_2885</name>
</gene>